<sequence length="554" mass="61469">MAYYRTPHDVTALPAWQALKDHRQAMQDFSMREAFNADPQRFNQFTLSSCGLFLDYSKNLINAETRNLLVGLANEVDLKGAIKALFDGEIVNSSEGRPALHTALRRPVGDKLSVNGVNVMPEVHKVLNQITDLVGRIHDGLWRGYTEKPITDVVNIGIGGSFLGPELVSEALLSYAQKGVRCHYLANIDGSEFHELTQKLRAETTLFIVSSKSFNTLETLKNAQAARAWYLAQGGSEAELYRHFIAVSSNNAAAVAFGIREENIFPMWDWVGGRYSLWSAIGLPIALAIGMSNFKELLSGAYTMDQHFQSAPFEQNMPVLLALLGVWYGNFWGAQSHAILPYDHYLRNITKHLQQLDMESNGKSVRQDGTPVSTDTGPVIWGGVGCNGQHAYHQLLHQGTQLIPADFIVPIVSFNPVSDHHQWLYANCLSQSQALMLGKTLPEAEAELRDKGMSEDQVQKLAPHKVIPGNRPSNTLVVERISPRRLGALVAMYEHKVFVQSVVWGINAFDQWGVELGKELGKGVYNRLVGSEETAAEDASTQGLINYFRGRHRG</sequence>
<evidence type="ECO:0000255" key="1">
    <source>
        <dbReference type="HAMAP-Rule" id="MF_00473"/>
    </source>
</evidence>
<name>G6PI_PSEPF</name>
<gene>
    <name evidence="1" type="primary">pgi</name>
    <name type="ordered locus">Pfl01_4813</name>
</gene>
<keyword id="KW-0963">Cytoplasm</keyword>
<keyword id="KW-0312">Gluconeogenesis</keyword>
<keyword id="KW-0324">Glycolysis</keyword>
<keyword id="KW-0413">Isomerase</keyword>
<feature type="chain" id="PRO_0000230928" description="Glucose-6-phosphate isomerase">
    <location>
        <begin position="1"/>
        <end position="554"/>
    </location>
</feature>
<feature type="active site" description="Proton donor" evidence="1">
    <location>
        <position position="359"/>
    </location>
</feature>
<feature type="active site" evidence="1">
    <location>
        <position position="390"/>
    </location>
</feature>
<feature type="active site" evidence="1">
    <location>
        <position position="518"/>
    </location>
</feature>
<dbReference type="EC" id="5.3.1.9" evidence="1"/>
<dbReference type="EMBL" id="CP000094">
    <property type="protein sequence ID" value="ABA76550.1"/>
    <property type="molecule type" value="Genomic_DNA"/>
</dbReference>
<dbReference type="RefSeq" id="WP_011335972.1">
    <property type="nucleotide sequence ID" value="NC_007492.2"/>
</dbReference>
<dbReference type="SMR" id="Q3K6Q4"/>
<dbReference type="KEGG" id="pfo:Pfl01_4813"/>
<dbReference type="eggNOG" id="COG0166">
    <property type="taxonomic scope" value="Bacteria"/>
</dbReference>
<dbReference type="HOGENOM" id="CLU_017947_3_1_6"/>
<dbReference type="UniPathway" id="UPA00109">
    <property type="reaction ID" value="UER00181"/>
</dbReference>
<dbReference type="UniPathway" id="UPA00138"/>
<dbReference type="Proteomes" id="UP000002704">
    <property type="component" value="Chromosome"/>
</dbReference>
<dbReference type="GO" id="GO:0005829">
    <property type="term" value="C:cytosol"/>
    <property type="evidence" value="ECO:0007669"/>
    <property type="project" value="TreeGrafter"/>
</dbReference>
<dbReference type="GO" id="GO:0097367">
    <property type="term" value="F:carbohydrate derivative binding"/>
    <property type="evidence" value="ECO:0007669"/>
    <property type="project" value="InterPro"/>
</dbReference>
<dbReference type="GO" id="GO:0004347">
    <property type="term" value="F:glucose-6-phosphate isomerase activity"/>
    <property type="evidence" value="ECO:0007669"/>
    <property type="project" value="UniProtKB-UniRule"/>
</dbReference>
<dbReference type="GO" id="GO:0048029">
    <property type="term" value="F:monosaccharide binding"/>
    <property type="evidence" value="ECO:0007669"/>
    <property type="project" value="TreeGrafter"/>
</dbReference>
<dbReference type="GO" id="GO:0006094">
    <property type="term" value="P:gluconeogenesis"/>
    <property type="evidence" value="ECO:0007669"/>
    <property type="project" value="UniProtKB-UniRule"/>
</dbReference>
<dbReference type="GO" id="GO:0051156">
    <property type="term" value="P:glucose 6-phosphate metabolic process"/>
    <property type="evidence" value="ECO:0007669"/>
    <property type="project" value="TreeGrafter"/>
</dbReference>
<dbReference type="GO" id="GO:0006096">
    <property type="term" value="P:glycolytic process"/>
    <property type="evidence" value="ECO:0007669"/>
    <property type="project" value="UniProtKB-UniRule"/>
</dbReference>
<dbReference type="CDD" id="cd05015">
    <property type="entry name" value="SIS_PGI_1"/>
    <property type="match status" value="1"/>
</dbReference>
<dbReference type="CDD" id="cd05016">
    <property type="entry name" value="SIS_PGI_2"/>
    <property type="match status" value="1"/>
</dbReference>
<dbReference type="FunFam" id="3.40.50.10490:FF:000018">
    <property type="entry name" value="Glucose-6-phosphate isomerase"/>
    <property type="match status" value="1"/>
</dbReference>
<dbReference type="Gene3D" id="1.10.1390.10">
    <property type="match status" value="1"/>
</dbReference>
<dbReference type="Gene3D" id="3.40.50.10490">
    <property type="entry name" value="Glucose-6-phosphate isomerase like protein, domain 1"/>
    <property type="match status" value="2"/>
</dbReference>
<dbReference type="HAMAP" id="MF_00473">
    <property type="entry name" value="G6P_isomerase"/>
    <property type="match status" value="1"/>
</dbReference>
<dbReference type="InterPro" id="IPR001672">
    <property type="entry name" value="G6P_Isomerase"/>
</dbReference>
<dbReference type="InterPro" id="IPR023096">
    <property type="entry name" value="G6P_Isomerase_C"/>
</dbReference>
<dbReference type="InterPro" id="IPR018189">
    <property type="entry name" value="Phosphoglucose_isomerase_CS"/>
</dbReference>
<dbReference type="InterPro" id="IPR046348">
    <property type="entry name" value="SIS_dom_sf"/>
</dbReference>
<dbReference type="InterPro" id="IPR035476">
    <property type="entry name" value="SIS_PGI_1"/>
</dbReference>
<dbReference type="InterPro" id="IPR035482">
    <property type="entry name" value="SIS_PGI_2"/>
</dbReference>
<dbReference type="NCBIfam" id="NF001211">
    <property type="entry name" value="PRK00179.1"/>
    <property type="match status" value="1"/>
</dbReference>
<dbReference type="PANTHER" id="PTHR11469">
    <property type="entry name" value="GLUCOSE-6-PHOSPHATE ISOMERASE"/>
    <property type="match status" value="1"/>
</dbReference>
<dbReference type="PANTHER" id="PTHR11469:SF1">
    <property type="entry name" value="GLUCOSE-6-PHOSPHATE ISOMERASE"/>
    <property type="match status" value="1"/>
</dbReference>
<dbReference type="Pfam" id="PF00342">
    <property type="entry name" value="PGI"/>
    <property type="match status" value="1"/>
</dbReference>
<dbReference type="PRINTS" id="PR00662">
    <property type="entry name" value="G6PISOMERASE"/>
</dbReference>
<dbReference type="SUPFAM" id="SSF53697">
    <property type="entry name" value="SIS domain"/>
    <property type="match status" value="1"/>
</dbReference>
<dbReference type="PROSITE" id="PS00765">
    <property type="entry name" value="P_GLUCOSE_ISOMERASE_1"/>
    <property type="match status" value="1"/>
</dbReference>
<dbReference type="PROSITE" id="PS00174">
    <property type="entry name" value="P_GLUCOSE_ISOMERASE_2"/>
    <property type="match status" value="1"/>
</dbReference>
<dbReference type="PROSITE" id="PS51463">
    <property type="entry name" value="P_GLUCOSE_ISOMERASE_3"/>
    <property type="match status" value="1"/>
</dbReference>
<organism>
    <name type="scientific">Pseudomonas fluorescens (strain Pf0-1)</name>
    <dbReference type="NCBI Taxonomy" id="205922"/>
    <lineage>
        <taxon>Bacteria</taxon>
        <taxon>Pseudomonadati</taxon>
        <taxon>Pseudomonadota</taxon>
        <taxon>Gammaproteobacteria</taxon>
        <taxon>Pseudomonadales</taxon>
        <taxon>Pseudomonadaceae</taxon>
        <taxon>Pseudomonas</taxon>
    </lineage>
</organism>
<proteinExistence type="inferred from homology"/>
<protein>
    <recommendedName>
        <fullName evidence="1">Glucose-6-phosphate isomerase</fullName>
        <shortName evidence="1">GPI</shortName>
        <ecNumber evidence="1">5.3.1.9</ecNumber>
    </recommendedName>
    <alternativeName>
        <fullName evidence="1">Phosphoglucose isomerase</fullName>
        <shortName evidence="1">PGI</shortName>
    </alternativeName>
    <alternativeName>
        <fullName evidence="1">Phosphohexose isomerase</fullName>
        <shortName evidence="1">PHI</shortName>
    </alternativeName>
</protein>
<accession>Q3K6Q4</accession>
<comment type="function">
    <text evidence="1">Catalyzes the reversible isomerization of glucose-6-phosphate to fructose-6-phosphate.</text>
</comment>
<comment type="catalytic activity">
    <reaction evidence="1">
        <text>alpha-D-glucose 6-phosphate = beta-D-fructose 6-phosphate</text>
        <dbReference type="Rhea" id="RHEA:11816"/>
        <dbReference type="ChEBI" id="CHEBI:57634"/>
        <dbReference type="ChEBI" id="CHEBI:58225"/>
        <dbReference type="EC" id="5.3.1.9"/>
    </reaction>
</comment>
<comment type="pathway">
    <text evidence="1">Carbohydrate biosynthesis; gluconeogenesis.</text>
</comment>
<comment type="pathway">
    <text evidence="1">Carbohydrate degradation; glycolysis; D-glyceraldehyde 3-phosphate and glycerone phosphate from D-glucose: step 2/4.</text>
</comment>
<comment type="subcellular location">
    <subcellularLocation>
        <location evidence="1">Cytoplasm</location>
    </subcellularLocation>
</comment>
<comment type="similarity">
    <text evidence="1">Belongs to the GPI family.</text>
</comment>
<reference key="1">
    <citation type="journal article" date="2009" name="Genome Biol.">
        <title>Genomic and genetic analyses of diversity and plant interactions of Pseudomonas fluorescens.</title>
        <authorList>
            <person name="Silby M.W."/>
            <person name="Cerdeno-Tarraga A.M."/>
            <person name="Vernikos G.S."/>
            <person name="Giddens S.R."/>
            <person name="Jackson R.W."/>
            <person name="Preston G.M."/>
            <person name="Zhang X.-X."/>
            <person name="Moon C.D."/>
            <person name="Gehrig S.M."/>
            <person name="Godfrey S.A.C."/>
            <person name="Knight C.G."/>
            <person name="Malone J.G."/>
            <person name="Robinson Z."/>
            <person name="Spiers A.J."/>
            <person name="Harris S."/>
            <person name="Challis G.L."/>
            <person name="Yaxley A.M."/>
            <person name="Harris D."/>
            <person name="Seeger K."/>
            <person name="Murphy L."/>
            <person name="Rutter S."/>
            <person name="Squares R."/>
            <person name="Quail M.A."/>
            <person name="Saunders E."/>
            <person name="Mavromatis K."/>
            <person name="Brettin T.S."/>
            <person name="Bentley S.D."/>
            <person name="Hothersall J."/>
            <person name="Stephens E."/>
            <person name="Thomas C.M."/>
            <person name="Parkhill J."/>
            <person name="Levy S.B."/>
            <person name="Rainey P.B."/>
            <person name="Thomson N.R."/>
        </authorList>
    </citation>
    <scope>NUCLEOTIDE SEQUENCE [LARGE SCALE GENOMIC DNA]</scope>
    <source>
        <strain>Pf0-1</strain>
    </source>
</reference>